<dbReference type="EMBL" id="KC538869">
    <property type="protein sequence ID" value="AGK88595.1"/>
    <property type="molecule type" value="mRNA"/>
</dbReference>
<dbReference type="EMBL" id="KC538870">
    <property type="protein sequence ID" value="AGK88596.1"/>
    <property type="molecule type" value="Genomic_DNA"/>
</dbReference>
<dbReference type="SMR" id="A0A0C4G5K0"/>
<dbReference type="GO" id="GO:0005576">
    <property type="term" value="C:extracellular region"/>
    <property type="evidence" value="ECO:0007669"/>
    <property type="project" value="UniProtKB-SubCell"/>
</dbReference>
<dbReference type="GO" id="GO:0016020">
    <property type="term" value="C:membrane"/>
    <property type="evidence" value="ECO:0007669"/>
    <property type="project" value="UniProtKB-KW"/>
</dbReference>
<dbReference type="GO" id="GO:0044218">
    <property type="term" value="C:other organism cell membrane"/>
    <property type="evidence" value="ECO:0007669"/>
    <property type="project" value="UniProtKB-KW"/>
</dbReference>
<dbReference type="GO" id="GO:0098542">
    <property type="term" value="P:defense response to other organism"/>
    <property type="evidence" value="ECO:0007669"/>
    <property type="project" value="InterPro"/>
</dbReference>
<dbReference type="GO" id="GO:0031640">
    <property type="term" value="P:killing of cells of another organism"/>
    <property type="evidence" value="ECO:0007669"/>
    <property type="project" value="UniProtKB-KW"/>
</dbReference>
<dbReference type="InterPro" id="IPR012523">
    <property type="entry name" value="Antimicrobial_4"/>
</dbReference>
<dbReference type="Pfam" id="PF08024">
    <property type="entry name" value="Antimicrobial_4"/>
    <property type="match status" value="1"/>
</dbReference>
<organism>
    <name type="scientific">Heterometrus spinifer</name>
    <name type="common">Asia giant forest scorpion</name>
    <name type="synonym">Malaysian black scorpion</name>
    <dbReference type="NCBI Taxonomy" id="118530"/>
    <lineage>
        <taxon>Eukaryota</taxon>
        <taxon>Metazoa</taxon>
        <taxon>Ecdysozoa</taxon>
        <taxon>Arthropoda</taxon>
        <taxon>Chelicerata</taxon>
        <taxon>Arachnida</taxon>
        <taxon>Scorpiones</taxon>
        <taxon>Iurida</taxon>
        <taxon>Scorpionoidea</taxon>
        <taxon>Scorpionidae</taxon>
        <taxon>Heterometrinae</taxon>
        <taxon>Heterometrus</taxon>
    </lineage>
</organism>
<evidence type="ECO:0000250" key="1">
    <source>
        <dbReference type="UniProtKB" id="P83240"/>
    </source>
</evidence>
<evidence type="ECO:0000255" key="2"/>
<evidence type="ECO:0000269" key="3">
    <source>
    </source>
</evidence>
<evidence type="ECO:0000303" key="4">
    <source>
    </source>
</evidence>
<evidence type="ECO:0000305" key="5"/>
<evidence type="ECO:0000305" key="6">
    <source>
    </source>
</evidence>
<keyword id="KW-0165">Cleavage on pair of basic residues</keyword>
<keyword id="KW-0204">Cytolysis</keyword>
<keyword id="KW-0354">Hemolysis</keyword>
<keyword id="KW-0472">Membrane</keyword>
<keyword id="KW-0964">Secreted</keyword>
<keyword id="KW-0732">Signal</keyword>
<keyword id="KW-1052">Target cell membrane</keyword>
<keyword id="KW-1053">Target membrane</keyword>
<feature type="signal peptide" evidence="2">
    <location>
        <begin position="1"/>
        <end position="22"/>
    </location>
</feature>
<feature type="peptide" id="PRO_5007393682" description="Heterin-2" evidence="1">
    <location>
        <begin position="23"/>
        <end position="46"/>
    </location>
</feature>
<feature type="propeptide" id="PRO_0000454584" evidence="6">
    <location>
        <begin position="47"/>
        <end position="73"/>
    </location>
</feature>
<feature type="mutagenesis site" description="Change in activity and specificity against bacteria and decrease in hemolytic activity." evidence="3">
    <location>
        <begin position="44"/>
        <end position="46"/>
    </location>
</feature>
<sequence>MQYKTFLVIFLAYLLVTEEALAFWGALAKGALKLIPSLVSSFTKKDKRALKNIFDPYQKNLDLELERLLSQLQ</sequence>
<accession>A0A0C4G5K0</accession>
<protein>
    <recommendedName>
        <fullName evidence="4">Heterin-2</fullName>
    </recommendedName>
</protein>
<proteinExistence type="evidence at protein level"/>
<reference key="1">
    <citation type="journal article" date="2014" name="Peptides">
        <title>Genomic and functional characterization of three new venom peptides from the scorpion Heterometrus spinifer.</title>
        <authorList>
            <person name="Wu S."/>
            <person name="Nie Y."/>
            <person name="Zeng X.C."/>
            <person name="Cao H."/>
            <person name="Zhang L."/>
            <person name="Zhou L."/>
            <person name="Yang Y."/>
            <person name="Luo X."/>
            <person name="Liu Y."/>
        </authorList>
    </citation>
    <scope>NUCLEOTIDE SEQUENCE [GENOMIC DNA / MRNA]</scope>
    <scope>FUNCTION</scope>
    <scope>SYNTHESIS OF 23-46</scope>
    <scope>MUTAGENESIS OF 44-LYS--ASP-46</scope>
</reference>
<name>NDB3_HETSP</name>
<comment type="function">
    <text evidence="3 5">Amphipathic peptide with potent activities against Gram-positive bacteria (MIC=5.6-30.0 uM) and weaker activities against the tested Gram-negative bacteria (MIC=15 uM to &gt;45 uM). It has high hemolytic activity against human erythrocytes (PubMed:24389272). May act by disrupting the integrity of the bacterial cell membrane (Probable).</text>
</comment>
<comment type="subcellular location">
    <subcellularLocation>
        <location evidence="6">Secreted</location>
    </subcellularLocation>
    <subcellularLocation>
        <location evidence="6">Target cell membrane</location>
    </subcellularLocation>
</comment>
<comment type="tissue specificity">
    <text evidence="6">Expressed by the venom gland.</text>
</comment>
<comment type="similarity">
    <text evidence="5">Belongs to the non-disulfide-bridged peptide (NDBP) superfamily. Medium-length antimicrobial peptide (group 3) family.</text>
</comment>